<dbReference type="EC" id="2.7.1.33" evidence="1"/>
<dbReference type="EMBL" id="AM295007">
    <property type="protein sequence ID" value="CAM30181.1"/>
    <property type="molecule type" value="Genomic_DNA"/>
</dbReference>
<dbReference type="RefSeq" id="WP_002984525.1">
    <property type="nucleotide sequence ID" value="NC_009332.1"/>
</dbReference>
<dbReference type="SMR" id="A2REA6"/>
<dbReference type="KEGG" id="spf:SpyM50853"/>
<dbReference type="HOGENOM" id="CLU_053818_1_1_9"/>
<dbReference type="UniPathway" id="UPA00241">
    <property type="reaction ID" value="UER00352"/>
</dbReference>
<dbReference type="GO" id="GO:0005737">
    <property type="term" value="C:cytoplasm"/>
    <property type="evidence" value="ECO:0007669"/>
    <property type="project" value="UniProtKB-SubCell"/>
</dbReference>
<dbReference type="GO" id="GO:0005524">
    <property type="term" value="F:ATP binding"/>
    <property type="evidence" value="ECO:0007669"/>
    <property type="project" value="UniProtKB-UniRule"/>
</dbReference>
<dbReference type="GO" id="GO:0004594">
    <property type="term" value="F:pantothenate kinase activity"/>
    <property type="evidence" value="ECO:0007669"/>
    <property type="project" value="UniProtKB-UniRule"/>
</dbReference>
<dbReference type="GO" id="GO:0015937">
    <property type="term" value="P:coenzyme A biosynthetic process"/>
    <property type="evidence" value="ECO:0007669"/>
    <property type="project" value="UniProtKB-UniRule"/>
</dbReference>
<dbReference type="CDD" id="cd02025">
    <property type="entry name" value="PanK"/>
    <property type="match status" value="1"/>
</dbReference>
<dbReference type="Gene3D" id="3.40.50.300">
    <property type="entry name" value="P-loop containing nucleotide triphosphate hydrolases"/>
    <property type="match status" value="1"/>
</dbReference>
<dbReference type="HAMAP" id="MF_00215">
    <property type="entry name" value="Pantothen_kinase_1"/>
    <property type="match status" value="1"/>
</dbReference>
<dbReference type="InterPro" id="IPR027417">
    <property type="entry name" value="P-loop_NTPase"/>
</dbReference>
<dbReference type="InterPro" id="IPR004566">
    <property type="entry name" value="PanK"/>
</dbReference>
<dbReference type="InterPro" id="IPR006083">
    <property type="entry name" value="PRK/URK"/>
</dbReference>
<dbReference type="NCBIfam" id="TIGR00554">
    <property type="entry name" value="panK_bact"/>
    <property type="match status" value="1"/>
</dbReference>
<dbReference type="PANTHER" id="PTHR10285">
    <property type="entry name" value="URIDINE KINASE"/>
    <property type="match status" value="1"/>
</dbReference>
<dbReference type="Pfam" id="PF00485">
    <property type="entry name" value="PRK"/>
    <property type="match status" value="1"/>
</dbReference>
<dbReference type="PIRSF" id="PIRSF000545">
    <property type="entry name" value="Pantothenate_kin"/>
    <property type="match status" value="1"/>
</dbReference>
<dbReference type="SUPFAM" id="SSF52540">
    <property type="entry name" value="P-loop containing nucleoside triphosphate hydrolases"/>
    <property type="match status" value="1"/>
</dbReference>
<evidence type="ECO:0000255" key="1">
    <source>
        <dbReference type="HAMAP-Rule" id="MF_00215"/>
    </source>
</evidence>
<organism>
    <name type="scientific">Streptococcus pyogenes serotype M5 (strain Manfredo)</name>
    <dbReference type="NCBI Taxonomy" id="160491"/>
    <lineage>
        <taxon>Bacteria</taxon>
        <taxon>Bacillati</taxon>
        <taxon>Bacillota</taxon>
        <taxon>Bacilli</taxon>
        <taxon>Lactobacillales</taxon>
        <taxon>Streptococcaceae</taxon>
        <taxon>Streptococcus</taxon>
    </lineage>
</organism>
<protein>
    <recommendedName>
        <fullName evidence="1">Pantothenate kinase</fullName>
        <ecNumber evidence="1">2.7.1.33</ecNumber>
    </recommendedName>
    <alternativeName>
        <fullName evidence="1">Pantothenic acid kinase</fullName>
    </alternativeName>
</protein>
<feature type="chain" id="PRO_1000043266" description="Pantothenate kinase">
    <location>
        <begin position="1"/>
        <end position="306"/>
    </location>
</feature>
<feature type="binding site" evidence="1">
    <location>
        <begin position="91"/>
        <end position="98"/>
    </location>
    <ligand>
        <name>ATP</name>
        <dbReference type="ChEBI" id="CHEBI:30616"/>
    </ligand>
</feature>
<proteinExistence type="inferred from homology"/>
<name>COAA_STRPG</name>
<reference key="1">
    <citation type="journal article" date="2007" name="J. Bacteriol.">
        <title>Complete genome of acute rheumatic fever-associated serotype M5 Streptococcus pyogenes strain Manfredo.</title>
        <authorList>
            <person name="Holden M.T.G."/>
            <person name="Scott A."/>
            <person name="Cherevach I."/>
            <person name="Chillingworth T."/>
            <person name="Churcher C."/>
            <person name="Cronin A."/>
            <person name="Dowd L."/>
            <person name="Feltwell T."/>
            <person name="Hamlin N."/>
            <person name="Holroyd S."/>
            <person name="Jagels K."/>
            <person name="Moule S."/>
            <person name="Mungall K."/>
            <person name="Quail M.A."/>
            <person name="Price C."/>
            <person name="Rabbinowitsch E."/>
            <person name="Sharp S."/>
            <person name="Skelton J."/>
            <person name="Whitehead S."/>
            <person name="Barrell B.G."/>
            <person name="Kehoe M."/>
            <person name="Parkhill J."/>
        </authorList>
    </citation>
    <scope>NUCLEOTIDE SEQUENCE [LARGE SCALE GENOMIC DNA]</scope>
    <source>
        <strain>Manfredo</strain>
    </source>
</reference>
<comment type="catalytic activity">
    <reaction evidence="1">
        <text>(R)-pantothenate + ATP = (R)-4'-phosphopantothenate + ADP + H(+)</text>
        <dbReference type="Rhea" id="RHEA:16373"/>
        <dbReference type="ChEBI" id="CHEBI:10986"/>
        <dbReference type="ChEBI" id="CHEBI:15378"/>
        <dbReference type="ChEBI" id="CHEBI:29032"/>
        <dbReference type="ChEBI" id="CHEBI:30616"/>
        <dbReference type="ChEBI" id="CHEBI:456216"/>
        <dbReference type="EC" id="2.7.1.33"/>
    </reaction>
</comment>
<comment type="pathway">
    <text evidence="1">Cofactor biosynthesis; coenzyme A biosynthesis; CoA from (R)-pantothenate: step 1/5.</text>
</comment>
<comment type="subcellular location">
    <subcellularLocation>
        <location evidence="1">Cytoplasm</location>
    </subcellularLocation>
</comment>
<comment type="similarity">
    <text evidence="1">Belongs to the prokaryotic pantothenate kinase family.</text>
</comment>
<gene>
    <name evidence="1" type="primary">coaA</name>
    <name type="ordered locus">SpyM50853</name>
</gene>
<keyword id="KW-0067">ATP-binding</keyword>
<keyword id="KW-0173">Coenzyme A biosynthesis</keyword>
<keyword id="KW-0963">Cytoplasm</keyword>
<keyword id="KW-0418">Kinase</keyword>
<keyword id="KW-0547">Nucleotide-binding</keyword>
<keyword id="KW-0808">Transferase</keyword>
<sequence>MSNEFINFEKISRESWKTLHQKAKALLTQEELKSITSLNDNISINDVIDIYLPLINLIQVYKIAQENLSFSKSLFLKKDIQLRPFIIGISGSVAVGKSTTSRLLQLLLSRTHPNSQVELVTTDGFLYPNQFLIEQGLLNRKGFPESYNMELLLDFLDSIKNGQTAFAPVYSHDIYDIIPNQKQSFNNPDFLIVEGINVFQNQQNNRLYMSDYFDFSIYIDADSSHIETWYIERFLSILKLAKRDPHNYYAQYAQLPRSEAIAFARNVWKNVNLENLEKFIEPTRNRAELILHKSADHKIDEIYLKK</sequence>
<accession>A2REA6</accession>